<evidence type="ECO:0000255" key="1">
    <source>
        <dbReference type="HAMAP-Rule" id="MF_01959"/>
    </source>
</evidence>
<gene>
    <name evidence="1" type="primary">ccmE</name>
    <name evidence="1" type="synonym">cycJ</name>
    <name type="ordered locus">RT0577</name>
</gene>
<proteinExistence type="inferred from homology"/>
<protein>
    <recommendedName>
        <fullName evidence="1">Cytochrome c-type biogenesis protein CcmE</fullName>
    </recommendedName>
    <alternativeName>
        <fullName evidence="1">Cytochrome c maturation protein E</fullName>
    </alternativeName>
    <alternativeName>
        <fullName evidence="1">Heme chaperone CcmE</fullName>
    </alternativeName>
</protein>
<reference key="1">
    <citation type="journal article" date="2004" name="J. Bacteriol.">
        <title>Complete genome sequence of Rickettsia typhi and comparison with sequences of other Rickettsiae.</title>
        <authorList>
            <person name="McLeod M.P."/>
            <person name="Qin X."/>
            <person name="Karpathy S.E."/>
            <person name="Gioia J."/>
            <person name="Highlander S.K."/>
            <person name="Fox G.E."/>
            <person name="McNeill T.Z."/>
            <person name="Jiang H."/>
            <person name="Muzny D."/>
            <person name="Jacob L.S."/>
            <person name="Hawes A.C."/>
            <person name="Sodergren E."/>
            <person name="Gill R."/>
            <person name="Hume J."/>
            <person name="Morgan M."/>
            <person name="Fan G."/>
            <person name="Amin A.G."/>
            <person name="Gibbs R.A."/>
            <person name="Hong C."/>
            <person name="Yu X.-J."/>
            <person name="Walker D.H."/>
            <person name="Weinstock G.M."/>
        </authorList>
    </citation>
    <scope>NUCLEOTIDE SEQUENCE [LARGE SCALE GENOMIC DNA]</scope>
    <source>
        <strain>ATCC VR-144 / Wilmington</strain>
    </source>
</reference>
<keyword id="KW-0997">Cell inner membrane</keyword>
<keyword id="KW-1003">Cell membrane</keyword>
<keyword id="KW-0201">Cytochrome c-type biogenesis</keyword>
<keyword id="KW-0349">Heme</keyword>
<keyword id="KW-0408">Iron</keyword>
<keyword id="KW-0472">Membrane</keyword>
<keyword id="KW-0479">Metal-binding</keyword>
<keyword id="KW-0735">Signal-anchor</keyword>
<keyword id="KW-0812">Transmembrane</keyword>
<keyword id="KW-1133">Transmembrane helix</keyword>
<organism>
    <name type="scientific">Rickettsia typhi (strain ATCC VR-144 / Wilmington)</name>
    <dbReference type="NCBI Taxonomy" id="257363"/>
    <lineage>
        <taxon>Bacteria</taxon>
        <taxon>Pseudomonadati</taxon>
        <taxon>Pseudomonadota</taxon>
        <taxon>Alphaproteobacteria</taxon>
        <taxon>Rickettsiales</taxon>
        <taxon>Rickettsiaceae</taxon>
        <taxon>Rickettsieae</taxon>
        <taxon>Rickettsia</taxon>
        <taxon>typhus group</taxon>
    </lineage>
</organism>
<comment type="function">
    <text evidence="1">Heme chaperone required for the biogenesis of c-type cytochromes. Transiently binds heme delivered by CcmC and transfers the heme to apo-cytochromes in a process facilitated by CcmF and CcmH.</text>
</comment>
<comment type="subcellular location">
    <subcellularLocation>
        <location evidence="1">Cell inner membrane</location>
        <topology evidence="1">Single-pass type II membrane protein</topology>
        <orientation evidence="1">Periplasmic side</orientation>
    </subcellularLocation>
</comment>
<comment type="similarity">
    <text evidence="1">Belongs to the CcmE/CycJ family.</text>
</comment>
<accession>Q68WF0</accession>
<feature type="chain" id="PRO_0000238858" description="Cytochrome c-type biogenesis protein CcmE">
    <location>
        <begin position="1"/>
        <end position="128"/>
    </location>
</feature>
<feature type="topological domain" description="Cytoplasmic" evidence="1">
    <location>
        <begin position="1"/>
        <end position="8"/>
    </location>
</feature>
<feature type="transmembrane region" description="Helical; Signal-anchor for type II membrane protein" evidence="1">
    <location>
        <begin position="9"/>
        <end position="29"/>
    </location>
</feature>
<feature type="topological domain" description="Periplasmic" evidence="1">
    <location>
        <begin position="30"/>
        <end position="128"/>
    </location>
</feature>
<feature type="binding site" description="covalent" evidence="1">
    <location>
        <position position="120"/>
    </location>
    <ligand>
        <name>heme</name>
        <dbReference type="ChEBI" id="CHEBI:30413"/>
    </ligand>
</feature>
<feature type="binding site" description="axial binding residue" evidence="1">
    <location>
        <position position="124"/>
    </location>
    <ligand>
        <name>heme</name>
        <dbReference type="ChEBI" id="CHEBI:30413"/>
    </ligand>
    <ligandPart>
        <name>Fe</name>
        <dbReference type="ChEBI" id="CHEBI:18248"/>
    </ligandPart>
</feature>
<dbReference type="EMBL" id="AE017197">
    <property type="protein sequence ID" value="AAU04042.1"/>
    <property type="molecule type" value="Genomic_DNA"/>
</dbReference>
<dbReference type="RefSeq" id="WP_011191023.1">
    <property type="nucleotide sequence ID" value="NC_006142.1"/>
</dbReference>
<dbReference type="SMR" id="Q68WF0"/>
<dbReference type="KEGG" id="rty:RT0577"/>
<dbReference type="eggNOG" id="COG2332">
    <property type="taxonomic scope" value="Bacteria"/>
</dbReference>
<dbReference type="HOGENOM" id="CLU_079503_1_1_5"/>
<dbReference type="OrthoDB" id="9793584at2"/>
<dbReference type="Proteomes" id="UP000000604">
    <property type="component" value="Chromosome"/>
</dbReference>
<dbReference type="GO" id="GO:0005886">
    <property type="term" value="C:plasma membrane"/>
    <property type="evidence" value="ECO:0007669"/>
    <property type="project" value="UniProtKB-SubCell"/>
</dbReference>
<dbReference type="GO" id="GO:0020037">
    <property type="term" value="F:heme binding"/>
    <property type="evidence" value="ECO:0007669"/>
    <property type="project" value="InterPro"/>
</dbReference>
<dbReference type="GO" id="GO:0046872">
    <property type="term" value="F:metal ion binding"/>
    <property type="evidence" value="ECO:0007669"/>
    <property type="project" value="UniProtKB-KW"/>
</dbReference>
<dbReference type="GO" id="GO:0017004">
    <property type="term" value="P:cytochrome complex assembly"/>
    <property type="evidence" value="ECO:0007669"/>
    <property type="project" value="UniProtKB-KW"/>
</dbReference>
<dbReference type="Gene3D" id="2.40.50.140">
    <property type="entry name" value="Nucleic acid-binding proteins"/>
    <property type="match status" value="1"/>
</dbReference>
<dbReference type="HAMAP" id="MF_01959">
    <property type="entry name" value="CcmE"/>
    <property type="match status" value="1"/>
</dbReference>
<dbReference type="InterPro" id="IPR004329">
    <property type="entry name" value="CcmE"/>
</dbReference>
<dbReference type="InterPro" id="IPR036127">
    <property type="entry name" value="CcmE-like_sf"/>
</dbReference>
<dbReference type="InterPro" id="IPR012340">
    <property type="entry name" value="NA-bd_OB-fold"/>
</dbReference>
<dbReference type="NCBIfam" id="NF009727">
    <property type="entry name" value="PRK13254.1-1"/>
    <property type="match status" value="1"/>
</dbReference>
<dbReference type="PANTHER" id="PTHR34128">
    <property type="entry name" value="CYTOCHROME C-TYPE BIOGENESIS PROTEIN CCME HOMOLOG, MITOCHONDRIAL"/>
    <property type="match status" value="1"/>
</dbReference>
<dbReference type="PANTHER" id="PTHR34128:SF2">
    <property type="entry name" value="CYTOCHROME C-TYPE BIOGENESIS PROTEIN CCME HOMOLOG, MITOCHONDRIAL"/>
    <property type="match status" value="1"/>
</dbReference>
<dbReference type="Pfam" id="PF03100">
    <property type="entry name" value="CcmE"/>
    <property type="match status" value="1"/>
</dbReference>
<dbReference type="SUPFAM" id="SSF82093">
    <property type="entry name" value="Heme chaperone CcmE"/>
    <property type="match status" value="1"/>
</dbReference>
<sequence>MQKIVRNRLIKIILCFCSTCLGISIILYNLEKNIIFFFPPSKINEAEQGKELRVGGLVKRDSINRISANKISFVITDNIKDLEILYQGVLPALFREGQGIIAIGQLSDNKFIARQLLAKHDENYRPPS</sequence>
<name>CCME_RICTY</name>